<reference key="1">
    <citation type="journal article" date="2011" name="J. Bacteriol.">
        <title>Comparative genomics of 28 Salmonella enterica isolates: evidence for CRISPR-mediated adaptive sublineage evolution.</title>
        <authorList>
            <person name="Fricke W.F."/>
            <person name="Mammel M.K."/>
            <person name="McDermott P.F."/>
            <person name="Tartera C."/>
            <person name="White D.G."/>
            <person name="Leclerc J.E."/>
            <person name="Ravel J."/>
            <person name="Cebula T.A."/>
        </authorList>
    </citation>
    <scope>NUCLEOTIDE SEQUENCE [LARGE SCALE GENOMIC DNA]</scope>
    <source>
        <strain>CT_02021853</strain>
    </source>
</reference>
<protein>
    <recommendedName>
        <fullName evidence="1">Ribosomal RNA small subunit methyltransferase G</fullName>
        <ecNumber evidence="1">2.1.1.170</ecNumber>
    </recommendedName>
    <alternativeName>
        <fullName evidence="1">16S rRNA 7-methylguanosine methyltransferase</fullName>
        <shortName evidence="1">16S rRNA m7G methyltransferase</shortName>
    </alternativeName>
</protein>
<feature type="chain" id="PRO_1000092648" description="Ribosomal RNA small subunit methyltransferase G">
    <location>
        <begin position="1"/>
        <end position="207"/>
    </location>
</feature>
<feature type="binding site" evidence="1">
    <location>
        <position position="73"/>
    </location>
    <ligand>
        <name>S-adenosyl-L-methionine</name>
        <dbReference type="ChEBI" id="CHEBI:59789"/>
    </ligand>
</feature>
<feature type="binding site" evidence="1">
    <location>
        <position position="78"/>
    </location>
    <ligand>
        <name>S-adenosyl-L-methionine</name>
        <dbReference type="ChEBI" id="CHEBI:59789"/>
    </ligand>
</feature>
<feature type="binding site" evidence="1">
    <location>
        <begin position="124"/>
        <end position="125"/>
    </location>
    <ligand>
        <name>S-adenosyl-L-methionine</name>
        <dbReference type="ChEBI" id="CHEBI:59789"/>
    </ligand>
</feature>
<feature type="binding site" evidence="1">
    <location>
        <position position="139"/>
    </location>
    <ligand>
        <name>S-adenosyl-L-methionine</name>
        <dbReference type="ChEBI" id="CHEBI:59789"/>
    </ligand>
</feature>
<keyword id="KW-0963">Cytoplasm</keyword>
<keyword id="KW-0489">Methyltransferase</keyword>
<keyword id="KW-0698">rRNA processing</keyword>
<keyword id="KW-0949">S-adenosyl-L-methionine</keyword>
<keyword id="KW-0808">Transferase</keyword>
<comment type="function">
    <text evidence="1">Specifically methylates the N7 position of guanine in position 527 of 16S rRNA.</text>
</comment>
<comment type="catalytic activity">
    <reaction evidence="1">
        <text>guanosine(527) in 16S rRNA + S-adenosyl-L-methionine = N(7)-methylguanosine(527) in 16S rRNA + S-adenosyl-L-homocysteine</text>
        <dbReference type="Rhea" id="RHEA:42732"/>
        <dbReference type="Rhea" id="RHEA-COMP:10209"/>
        <dbReference type="Rhea" id="RHEA-COMP:10210"/>
        <dbReference type="ChEBI" id="CHEBI:57856"/>
        <dbReference type="ChEBI" id="CHEBI:59789"/>
        <dbReference type="ChEBI" id="CHEBI:74269"/>
        <dbReference type="ChEBI" id="CHEBI:74480"/>
        <dbReference type="EC" id="2.1.1.170"/>
    </reaction>
</comment>
<comment type="subcellular location">
    <subcellularLocation>
        <location evidence="1">Cytoplasm</location>
    </subcellularLocation>
</comment>
<comment type="similarity">
    <text evidence="1">Belongs to the methyltransferase superfamily. RNA methyltransferase RsmG family.</text>
</comment>
<dbReference type="EC" id="2.1.1.170" evidence="1"/>
<dbReference type="EMBL" id="CP001144">
    <property type="protein sequence ID" value="ACH75726.1"/>
    <property type="molecule type" value="Genomic_DNA"/>
</dbReference>
<dbReference type="RefSeq" id="WP_001519938.1">
    <property type="nucleotide sequence ID" value="NC_011205.1"/>
</dbReference>
<dbReference type="SMR" id="B5FN43"/>
<dbReference type="KEGG" id="sed:SeD_A4265"/>
<dbReference type="HOGENOM" id="CLU_065341_2_2_6"/>
<dbReference type="Proteomes" id="UP000008322">
    <property type="component" value="Chromosome"/>
</dbReference>
<dbReference type="GO" id="GO:0005829">
    <property type="term" value="C:cytosol"/>
    <property type="evidence" value="ECO:0007669"/>
    <property type="project" value="TreeGrafter"/>
</dbReference>
<dbReference type="GO" id="GO:0070043">
    <property type="term" value="F:rRNA (guanine-N7-)-methyltransferase activity"/>
    <property type="evidence" value="ECO:0007669"/>
    <property type="project" value="UniProtKB-UniRule"/>
</dbReference>
<dbReference type="CDD" id="cd02440">
    <property type="entry name" value="AdoMet_MTases"/>
    <property type="match status" value="1"/>
</dbReference>
<dbReference type="FunFam" id="3.40.50.150:FF:000032">
    <property type="entry name" value="Ribosomal RNA small subunit methyltransferase G"/>
    <property type="match status" value="1"/>
</dbReference>
<dbReference type="Gene3D" id="3.40.50.150">
    <property type="entry name" value="Vaccinia Virus protein VP39"/>
    <property type="match status" value="1"/>
</dbReference>
<dbReference type="HAMAP" id="MF_00074">
    <property type="entry name" value="16SrRNA_methyltr_G"/>
    <property type="match status" value="1"/>
</dbReference>
<dbReference type="InterPro" id="IPR003682">
    <property type="entry name" value="rRNA_ssu_MeTfrase_G"/>
</dbReference>
<dbReference type="InterPro" id="IPR029063">
    <property type="entry name" value="SAM-dependent_MTases_sf"/>
</dbReference>
<dbReference type="NCBIfam" id="TIGR00138">
    <property type="entry name" value="rsmG_gidB"/>
    <property type="match status" value="1"/>
</dbReference>
<dbReference type="PANTHER" id="PTHR31760">
    <property type="entry name" value="S-ADENOSYL-L-METHIONINE-DEPENDENT METHYLTRANSFERASES SUPERFAMILY PROTEIN"/>
    <property type="match status" value="1"/>
</dbReference>
<dbReference type="PANTHER" id="PTHR31760:SF0">
    <property type="entry name" value="S-ADENOSYL-L-METHIONINE-DEPENDENT METHYLTRANSFERASES SUPERFAMILY PROTEIN"/>
    <property type="match status" value="1"/>
</dbReference>
<dbReference type="Pfam" id="PF02527">
    <property type="entry name" value="GidB"/>
    <property type="match status" value="1"/>
</dbReference>
<dbReference type="PIRSF" id="PIRSF003078">
    <property type="entry name" value="GidB"/>
    <property type="match status" value="1"/>
</dbReference>
<dbReference type="SUPFAM" id="SSF53335">
    <property type="entry name" value="S-adenosyl-L-methionine-dependent methyltransferases"/>
    <property type="match status" value="1"/>
</dbReference>
<proteinExistence type="inferred from homology"/>
<name>RSMG_SALDC</name>
<sequence length="207" mass="23175">MLNKLSRLLADAGISLTDHQKTLLVAYVDMLHKWNKAYNLTSVRDPNEMLVRHILDSIVVAPYLQGQRFIDVGTGPGLPGIPLAIVLPDAHFTLLDSLGKRVRFLRQVQHELKLENITPVQSRVEAYPSEPPFDGVISRAFASLNDMVSWCHHLPGEKGRFYALKGQLPGDEIASLPDNFSVESVEKLRVPQLEGERHLVIIKSNKV</sequence>
<accession>B5FN43</accession>
<organism>
    <name type="scientific">Salmonella dublin (strain CT_02021853)</name>
    <dbReference type="NCBI Taxonomy" id="439851"/>
    <lineage>
        <taxon>Bacteria</taxon>
        <taxon>Pseudomonadati</taxon>
        <taxon>Pseudomonadota</taxon>
        <taxon>Gammaproteobacteria</taxon>
        <taxon>Enterobacterales</taxon>
        <taxon>Enterobacteriaceae</taxon>
        <taxon>Salmonella</taxon>
    </lineage>
</organism>
<gene>
    <name evidence="1" type="primary">rsmG</name>
    <name type="ordered locus">SeD_A4265</name>
</gene>
<evidence type="ECO:0000255" key="1">
    <source>
        <dbReference type="HAMAP-Rule" id="MF_00074"/>
    </source>
</evidence>